<protein>
    <recommendedName>
        <fullName>Uncharacterized protein SPCC1884.01</fullName>
    </recommendedName>
</protein>
<feature type="chain" id="PRO_0000429006" description="Uncharacterized protein SPCC1884.01">
    <location>
        <begin position="1"/>
        <end position="478"/>
    </location>
</feature>
<gene>
    <name type="ORF">SPCC1884.01</name>
</gene>
<keyword id="KW-1185">Reference proteome</keyword>
<dbReference type="EMBL" id="CU329672">
    <property type="protein sequence ID" value="CAO77681.1"/>
    <property type="molecule type" value="Genomic_DNA"/>
</dbReference>
<dbReference type="RefSeq" id="XP_004001736.1">
    <property type="nucleotide sequence ID" value="XM_004001687.1"/>
</dbReference>
<dbReference type="SMR" id="U3H0A9"/>
<dbReference type="BioGRID" id="275376">
    <property type="interactions" value="8"/>
</dbReference>
<dbReference type="STRING" id="284812.U3H0A9"/>
<dbReference type="PaxDb" id="4896-SPCC1884.01.1"/>
<dbReference type="EnsemblFungi" id="SPCC1884.01.1">
    <property type="protein sequence ID" value="SPCC1884.01.1:pep"/>
    <property type="gene ID" value="SPCC1884.01"/>
</dbReference>
<dbReference type="PomBase" id="SPCC1884.01"/>
<dbReference type="VEuPathDB" id="FungiDB:SPCC1884.01"/>
<dbReference type="HOGENOM" id="CLU_571284_0_0_1"/>
<dbReference type="InParanoid" id="U3H0A9"/>
<dbReference type="PRO" id="PR:U3H0A9"/>
<dbReference type="Proteomes" id="UP000002485">
    <property type="component" value="Chromosome III"/>
</dbReference>
<dbReference type="Gene3D" id="3.90.1840.10">
    <property type="entry name" value="Major capsid protein"/>
    <property type="match status" value="2"/>
</dbReference>
<dbReference type="InterPro" id="IPR015302">
    <property type="entry name" value="Major_coat_LA-virus"/>
</dbReference>
<dbReference type="InterPro" id="IPR036332">
    <property type="entry name" value="Major_coat_LA-virus_sf"/>
</dbReference>
<dbReference type="Pfam" id="PF09220">
    <property type="entry name" value="LA-virus_coat"/>
    <property type="match status" value="1"/>
</dbReference>
<dbReference type="SUPFAM" id="SSF82856">
    <property type="entry name" value="L-A virus major coat protein"/>
    <property type="match status" value="1"/>
</dbReference>
<organism>
    <name type="scientific">Schizosaccharomyces pombe (strain 972 / ATCC 24843)</name>
    <name type="common">Fission yeast</name>
    <dbReference type="NCBI Taxonomy" id="284812"/>
    <lineage>
        <taxon>Eukaryota</taxon>
        <taxon>Fungi</taxon>
        <taxon>Dikarya</taxon>
        <taxon>Ascomycota</taxon>
        <taxon>Taphrinomycotina</taxon>
        <taxon>Schizosaccharomycetes</taxon>
        <taxon>Schizosaccharomycetales</taxon>
        <taxon>Schizosaccharomycetaceae</taxon>
        <taxon>Schizosaccharomyces</taxon>
    </lineage>
</organism>
<proteinExistence type="predicted"/>
<sequence length="478" mass="55330">MNIQKYGLSSDISIKLKTKVDKIKEKKEEVLKLNTSTFYGKAEVRLINDVSILDGINKSVVRYDTGKISEGLLHQEEMKRGVEKRPNCSETRKTHFHDNCVGLLYNILRLFYLIDINFDEYDAYATYFQDNALLVINVHLFGDQPFSSLENFVVQPVSVNVICKPELNETFNSNSNYLKVGNTIDEHFLKELVNGTQDIENIIVRLVKDNRLFTQFDIAYGMVAQVFMQLKPFLVEGTYWIAEPLLMNIPELKTQRGRYPSLLDGHLWKLTNSLKLLLKIASYTQKYLLSIEKYSEEREKKMLLNGEINESSGLLHDVVLAAELFNVKHASYYNVHAGLDRFQFLRKPLKSLVMFTDVVKERDGTCDFCGTYFEDSRMSTSYLCDENRKGENRKLEIRDLVPYLYPVLLRGVLSLPVFESRLKFAAKVPIYPKGPLYTTDTHTYNYLMNCFVPMNEEQVLSACYRFFAKSAENELFEA</sequence>
<reference key="1">
    <citation type="journal article" date="2002" name="Nature">
        <title>The genome sequence of Schizosaccharomyces pombe.</title>
        <authorList>
            <person name="Wood V."/>
            <person name="Gwilliam R."/>
            <person name="Rajandream M.A."/>
            <person name="Lyne M.H."/>
            <person name="Lyne R."/>
            <person name="Stewart A."/>
            <person name="Sgouros J.G."/>
            <person name="Peat N."/>
            <person name="Hayles J."/>
            <person name="Baker S.G."/>
            <person name="Basham D."/>
            <person name="Bowman S."/>
            <person name="Brooks K."/>
            <person name="Brown D."/>
            <person name="Brown S."/>
            <person name="Chillingworth T."/>
            <person name="Churcher C.M."/>
            <person name="Collins M."/>
            <person name="Connor R."/>
            <person name="Cronin A."/>
            <person name="Davis P."/>
            <person name="Feltwell T."/>
            <person name="Fraser A."/>
            <person name="Gentles S."/>
            <person name="Goble A."/>
            <person name="Hamlin N."/>
            <person name="Harris D.E."/>
            <person name="Hidalgo J."/>
            <person name="Hodgson G."/>
            <person name="Holroyd S."/>
            <person name="Hornsby T."/>
            <person name="Howarth S."/>
            <person name="Huckle E.J."/>
            <person name="Hunt S."/>
            <person name="Jagels K."/>
            <person name="James K.D."/>
            <person name="Jones L."/>
            <person name="Jones M."/>
            <person name="Leather S."/>
            <person name="McDonald S."/>
            <person name="McLean J."/>
            <person name="Mooney P."/>
            <person name="Moule S."/>
            <person name="Mungall K.L."/>
            <person name="Murphy L.D."/>
            <person name="Niblett D."/>
            <person name="Odell C."/>
            <person name="Oliver K."/>
            <person name="O'Neil S."/>
            <person name="Pearson D."/>
            <person name="Quail M.A."/>
            <person name="Rabbinowitsch E."/>
            <person name="Rutherford K.M."/>
            <person name="Rutter S."/>
            <person name="Saunders D."/>
            <person name="Seeger K."/>
            <person name="Sharp S."/>
            <person name="Skelton J."/>
            <person name="Simmonds M.N."/>
            <person name="Squares R."/>
            <person name="Squares S."/>
            <person name="Stevens K."/>
            <person name="Taylor K."/>
            <person name="Taylor R.G."/>
            <person name="Tivey A."/>
            <person name="Walsh S.V."/>
            <person name="Warren T."/>
            <person name="Whitehead S."/>
            <person name="Woodward J.R."/>
            <person name="Volckaert G."/>
            <person name="Aert R."/>
            <person name="Robben J."/>
            <person name="Grymonprez B."/>
            <person name="Weltjens I."/>
            <person name="Vanstreels E."/>
            <person name="Rieger M."/>
            <person name="Schaefer M."/>
            <person name="Mueller-Auer S."/>
            <person name="Gabel C."/>
            <person name="Fuchs M."/>
            <person name="Duesterhoeft A."/>
            <person name="Fritzc C."/>
            <person name="Holzer E."/>
            <person name="Moestl D."/>
            <person name="Hilbert H."/>
            <person name="Borzym K."/>
            <person name="Langer I."/>
            <person name="Beck A."/>
            <person name="Lehrach H."/>
            <person name="Reinhardt R."/>
            <person name="Pohl T.M."/>
            <person name="Eger P."/>
            <person name="Zimmermann W."/>
            <person name="Wedler H."/>
            <person name="Wambutt R."/>
            <person name="Purnelle B."/>
            <person name="Goffeau A."/>
            <person name="Cadieu E."/>
            <person name="Dreano S."/>
            <person name="Gloux S."/>
            <person name="Lelaure V."/>
            <person name="Mottier S."/>
            <person name="Galibert F."/>
            <person name="Aves S.J."/>
            <person name="Xiang Z."/>
            <person name="Hunt C."/>
            <person name="Moore K."/>
            <person name="Hurst S.M."/>
            <person name="Lucas M."/>
            <person name="Rochet M."/>
            <person name="Gaillardin C."/>
            <person name="Tallada V.A."/>
            <person name="Garzon A."/>
            <person name="Thode G."/>
            <person name="Daga R.R."/>
            <person name="Cruzado L."/>
            <person name="Jimenez J."/>
            <person name="Sanchez M."/>
            <person name="del Rey F."/>
            <person name="Benito J."/>
            <person name="Dominguez A."/>
            <person name="Revuelta J.L."/>
            <person name="Moreno S."/>
            <person name="Armstrong J."/>
            <person name="Forsburg S.L."/>
            <person name="Cerutti L."/>
            <person name="Lowe T."/>
            <person name="McCombie W.R."/>
            <person name="Paulsen I."/>
            <person name="Potashkin J."/>
            <person name="Shpakovski G.V."/>
            <person name="Ussery D."/>
            <person name="Barrell B.G."/>
            <person name="Nurse P."/>
        </authorList>
    </citation>
    <scope>NUCLEOTIDE SEQUENCE [LARGE SCALE GENOMIC DNA]</scope>
    <source>
        <strain>972 / ATCC 24843</strain>
    </source>
</reference>
<name>YJ61_SCHPO</name>
<accession>U3H0A9</accession>